<organism>
    <name type="scientific">Serratia proteamaculans (strain 568)</name>
    <dbReference type="NCBI Taxonomy" id="399741"/>
    <lineage>
        <taxon>Bacteria</taxon>
        <taxon>Pseudomonadati</taxon>
        <taxon>Pseudomonadota</taxon>
        <taxon>Gammaproteobacteria</taxon>
        <taxon>Enterobacterales</taxon>
        <taxon>Yersiniaceae</taxon>
        <taxon>Serratia</taxon>
    </lineage>
</organism>
<dbReference type="EC" id="2.1.1.163" evidence="1"/>
<dbReference type="EC" id="2.1.1.201" evidence="1"/>
<dbReference type="EMBL" id="CP000826">
    <property type="protein sequence ID" value="ABV39358.1"/>
    <property type="molecule type" value="Genomic_DNA"/>
</dbReference>
<dbReference type="SMR" id="A8G8B8"/>
<dbReference type="STRING" id="399741.Spro_0248"/>
<dbReference type="KEGG" id="spe:Spro_0248"/>
<dbReference type="eggNOG" id="COG2226">
    <property type="taxonomic scope" value="Bacteria"/>
</dbReference>
<dbReference type="HOGENOM" id="CLU_037990_0_0_6"/>
<dbReference type="OrthoDB" id="9808140at2"/>
<dbReference type="UniPathway" id="UPA00079">
    <property type="reaction ID" value="UER00169"/>
</dbReference>
<dbReference type="UniPathway" id="UPA00232"/>
<dbReference type="GO" id="GO:0008425">
    <property type="term" value="F:2-methoxy-6-polyprenyl-1,4-benzoquinol methyltransferase activity"/>
    <property type="evidence" value="ECO:0007669"/>
    <property type="project" value="UniProtKB-UniRule"/>
</dbReference>
<dbReference type="GO" id="GO:0043770">
    <property type="term" value="F:demethylmenaquinone methyltransferase activity"/>
    <property type="evidence" value="ECO:0007669"/>
    <property type="project" value="UniProtKB-UniRule"/>
</dbReference>
<dbReference type="GO" id="GO:0009060">
    <property type="term" value="P:aerobic respiration"/>
    <property type="evidence" value="ECO:0007669"/>
    <property type="project" value="UniProtKB-UniRule"/>
</dbReference>
<dbReference type="GO" id="GO:0009234">
    <property type="term" value="P:menaquinone biosynthetic process"/>
    <property type="evidence" value="ECO:0007669"/>
    <property type="project" value="UniProtKB-UniRule"/>
</dbReference>
<dbReference type="GO" id="GO:0032259">
    <property type="term" value="P:methylation"/>
    <property type="evidence" value="ECO:0007669"/>
    <property type="project" value="UniProtKB-KW"/>
</dbReference>
<dbReference type="CDD" id="cd02440">
    <property type="entry name" value="AdoMet_MTases"/>
    <property type="match status" value="1"/>
</dbReference>
<dbReference type="FunFam" id="3.40.50.150:FF:000014">
    <property type="entry name" value="Ubiquinone/menaquinone biosynthesis C-methyltransferase UbiE"/>
    <property type="match status" value="1"/>
</dbReference>
<dbReference type="Gene3D" id="3.40.50.150">
    <property type="entry name" value="Vaccinia Virus protein VP39"/>
    <property type="match status" value="1"/>
</dbReference>
<dbReference type="HAMAP" id="MF_01813">
    <property type="entry name" value="MenG_UbiE_methyltr"/>
    <property type="match status" value="1"/>
</dbReference>
<dbReference type="InterPro" id="IPR029063">
    <property type="entry name" value="SAM-dependent_MTases_sf"/>
</dbReference>
<dbReference type="InterPro" id="IPR004033">
    <property type="entry name" value="UbiE/COQ5_MeTrFase"/>
</dbReference>
<dbReference type="InterPro" id="IPR023576">
    <property type="entry name" value="UbiE/COQ5_MeTrFase_CS"/>
</dbReference>
<dbReference type="NCBIfam" id="TIGR01934">
    <property type="entry name" value="MenG_MenH_UbiE"/>
    <property type="match status" value="1"/>
</dbReference>
<dbReference type="NCBIfam" id="NF001240">
    <property type="entry name" value="PRK00216.1-1"/>
    <property type="match status" value="1"/>
</dbReference>
<dbReference type="NCBIfam" id="NF001242">
    <property type="entry name" value="PRK00216.1-3"/>
    <property type="match status" value="1"/>
</dbReference>
<dbReference type="NCBIfam" id="NF001244">
    <property type="entry name" value="PRK00216.1-5"/>
    <property type="match status" value="1"/>
</dbReference>
<dbReference type="PANTHER" id="PTHR43591:SF24">
    <property type="entry name" value="2-METHOXY-6-POLYPRENYL-1,4-BENZOQUINOL METHYLASE, MITOCHONDRIAL"/>
    <property type="match status" value="1"/>
</dbReference>
<dbReference type="PANTHER" id="PTHR43591">
    <property type="entry name" value="METHYLTRANSFERASE"/>
    <property type="match status" value="1"/>
</dbReference>
<dbReference type="Pfam" id="PF01209">
    <property type="entry name" value="Ubie_methyltran"/>
    <property type="match status" value="1"/>
</dbReference>
<dbReference type="SUPFAM" id="SSF53335">
    <property type="entry name" value="S-adenosyl-L-methionine-dependent methyltransferases"/>
    <property type="match status" value="1"/>
</dbReference>
<dbReference type="PROSITE" id="PS51608">
    <property type="entry name" value="SAM_MT_UBIE"/>
    <property type="match status" value="1"/>
</dbReference>
<dbReference type="PROSITE" id="PS01183">
    <property type="entry name" value="UBIE_1"/>
    <property type="match status" value="1"/>
</dbReference>
<dbReference type="PROSITE" id="PS01184">
    <property type="entry name" value="UBIE_2"/>
    <property type="match status" value="1"/>
</dbReference>
<sequence length="251" mass="28086">MADQPQETTDFGFRTVARDEKQAMVADVFHSVAAKYDVMNDLMSFGIHRIWKRFTIDCSGVRRGQRVLDLAGGTGDLAAKFSRMVGEQGQVVLADINDSMLKMGREKLRDRGIIGNVNYVQANAEALPFPDNYFDCITISFGLRNVTDKDKALRSMFRVLKPGGRLLVLEFSKPLLAPLSKAYDAYSFHVLPKIGELVVKDPESYRYLAESIRMHPDQETLKGMMGAAGFDNVTYFNLTGGIVALHRGFKF</sequence>
<proteinExistence type="inferred from homology"/>
<accession>A8G8B8</accession>
<name>UBIE_SERP5</name>
<feature type="chain" id="PRO_1000070202" description="Ubiquinone/menaquinone biosynthesis C-methyltransferase UbiE">
    <location>
        <begin position="1"/>
        <end position="251"/>
    </location>
</feature>
<feature type="binding site" evidence="1">
    <location>
        <position position="74"/>
    </location>
    <ligand>
        <name>S-adenosyl-L-methionine</name>
        <dbReference type="ChEBI" id="CHEBI:59789"/>
    </ligand>
</feature>
<feature type="binding site" evidence="1">
    <location>
        <position position="95"/>
    </location>
    <ligand>
        <name>S-adenosyl-L-methionine</name>
        <dbReference type="ChEBI" id="CHEBI:59789"/>
    </ligand>
</feature>
<feature type="binding site" evidence="1">
    <location>
        <begin position="123"/>
        <end position="124"/>
    </location>
    <ligand>
        <name>S-adenosyl-L-methionine</name>
        <dbReference type="ChEBI" id="CHEBI:59789"/>
    </ligand>
</feature>
<feature type="binding site" evidence="1">
    <location>
        <position position="140"/>
    </location>
    <ligand>
        <name>S-adenosyl-L-methionine</name>
        <dbReference type="ChEBI" id="CHEBI:59789"/>
    </ligand>
</feature>
<gene>
    <name evidence="1" type="primary">ubiE</name>
    <name type="ordered locus">Spro_0248</name>
</gene>
<protein>
    <recommendedName>
        <fullName evidence="1">Ubiquinone/menaquinone biosynthesis C-methyltransferase UbiE</fullName>
        <ecNumber evidence="1">2.1.1.163</ecNumber>
        <ecNumber evidence="1">2.1.1.201</ecNumber>
    </recommendedName>
    <alternativeName>
        <fullName evidence="1">2-methoxy-6-polyprenyl-1,4-benzoquinol methylase</fullName>
    </alternativeName>
    <alternativeName>
        <fullName evidence="1">Demethylmenaquinone methyltransferase</fullName>
    </alternativeName>
</protein>
<comment type="function">
    <text evidence="1">Methyltransferase required for the conversion of demethylmenaquinol (DMKH2) to menaquinol (MKH2) and the conversion of 2-polyprenyl-6-methoxy-1,4-benzoquinol (DDMQH2) to 2-polyprenyl-3-methyl-6-methoxy-1,4-benzoquinol (DMQH2).</text>
</comment>
<comment type="catalytic activity">
    <reaction evidence="1">
        <text>a 2-demethylmenaquinol + S-adenosyl-L-methionine = a menaquinol + S-adenosyl-L-homocysteine + H(+)</text>
        <dbReference type="Rhea" id="RHEA:42640"/>
        <dbReference type="Rhea" id="RHEA-COMP:9539"/>
        <dbReference type="Rhea" id="RHEA-COMP:9563"/>
        <dbReference type="ChEBI" id="CHEBI:15378"/>
        <dbReference type="ChEBI" id="CHEBI:18151"/>
        <dbReference type="ChEBI" id="CHEBI:55437"/>
        <dbReference type="ChEBI" id="CHEBI:57856"/>
        <dbReference type="ChEBI" id="CHEBI:59789"/>
        <dbReference type="EC" id="2.1.1.163"/>
    </reaction>
</comment>
<comment type="catalytic activity">
    <reaction evidence="1">
        <text>a 2-methoxy-6-(all-trans-polyprenyl)benzene-1,4-diol + S-adenosyl-L-methionine = a 5-methoxy-2-methyl-3-(all-trans-polyprenyl)benzene-1,4-diol + S-adenosyl-L-homocysteine + H(+)</text>
        <dbReference type="Rhea" id="RHEA:28286"/>
        <dbReference type="Rhea" id="RHEA-COMP:10858"/>
        <dbReference type="Rhea" id="RHEA-COMP:10859"/>
        <dbReference type="ChEBI" id="CHEBI:15378"/>
        <dbReference type="ChEBI" id="CHEBI:57856"/>
        <dbReference type="ChEBI" id="CHEBI:59789"/>
        <dbReference type="ChEBI" id="CHEBI:84166"/>
        <dbReference type="ChEBI" id="CHEBI:84167"/>
        <dbReference type="EC" id="2.1.1.201"/>
    </reaction>
</comment>
<comment type="pathway">
    <text evidence="1">Quinol/quinone metabolism; menaquinone biosynthesis; menaquinol from 1,4-dihydroxy-2-naphthoate: step 2/2.</text>
</comment>
<comment type="pathway">
    <text evidence="1">Cofactor biosynthesis; ubiquinone biosynthesis.</text>
</comment>
<comment type="similarity">
    <text evidence="1">Belongs to the class I-like SAM-binding methyltransferase superfamily. MenG/UbiE family.</text>
</comment>
<evidence type="ECO:0000255" key="1">
    <source>
        <dbReference type="HAMAP-Rule" id="MF_01813"/>
    </source>
</evidence>
<reference key="1">
    <citation type="submission" date="2007-09" db="EMBL/GenBank/DDBJ databases">
        <title>Complete sequence of chromosome of Serratia proteamaculans 568.</title>
        <authorList>
            <consortium name="US DOE Joint Genome Institute"/>
            <person name="Copeland A."/>
            <person name="Lucas S."/>
            <person name="Lapidus A."/>
            <person name="Barry K."/>
            <person name="Glavina del Rio T."/>
            <person name="Dalin E."/>
            <person name="Tice H."/>
            <person name="Pitluck S."/>
            <person name="Chain P."/>
            <person name="Malfatti S."/>
            <person name="Shin M."/>
            <person name="Vergez L."/>
            <person name="Schmutz J."/>
            <person name="Larimer F."/>
            <person name="Land M."/>
            <person name="Hauser L."/>
            <person name="Kyrpides N."/>
            <person name="Kim E."/>
            <person name="Taghavi S."/>
            <person name="Newman L."/>
            <person name="Vangronsveld J."/>
            <person name="van der Lelie D."/>
            <person name="Richardson P."/>
        </authorList>
    </citation>
    <scope>NUCLEOTIDE SEQUENCE [LARGE SCALE GENOMIC DNA]</scope>
    <source>
        <strain>568</strain>
    </source>
</reference>
<keyword id="KW-0474">Menaquinone biosynthesis</keyword>
<keyword id="KW-0489">Methyltransferase</keyword>
<keyword id="KW-0949">S-adenosyl-L-methionine</keyword>
<keyword id="KW-0808">Transferase</keyword>
<keyword id="KW-0831">Ubiquinone biosynthesis</keyword>